<comment type="function">
    <text evidence="1">Catalyzes the ATP-dependent amidation of deamido-NAD to form NAD. Uses ammonia as a nitrogen source.</text>
</comment>
<comment type="catalytic activity">
    <reaction evidence="1">
        <text>deamido-NAD(+) + NH4(+) + ATP = AMP + diphosphate + NAD(+) + H(+)</text>
        <dbReference type="Rhea" id="RHEA:21188"/>
        <dbReference type="ChEBI" id="CHEBI:15378"/>
        <dbReference type="ChEBI" id="CHEBI:28938"/>
        <dbReference type="ChEBI" id="CHEBI:30616"/>
        <dbReference type="ChEBI" id="CHEBI:33019"/>
        <dbReference type="ChEBI" id="CHEBI:57540"/>
        <dbReference type="ChEBI" id="CHEBI:58437"/>
        <dbReference type="ChEBI" id="CHEBI:456215"/>
        <dbReference type="EC" id="6.3.1.5"/>
    </reaction>
</comment>
<comment type="pathway">
    <text evidence="1">Cofactor biosynthesis; NAD(+) biosynthesis; NAD(+) from deamido-NAD(+) (ammonia route): step 1/1.</text>
</comment>
<comment type="subunit">
    <text evidence="1">Homodimer.</text>
</comment>
<comment type="similarity">
    <text evidence="1">Belongs to the NAD synthetase family.</text>
</comment>
<organism>
    <name type="scientific">Helicobacter hepaticus (strain ATCC 51449 / 3B1)</name>
    <dbReference type="NCBI Taxonomy" id="235279"/>
    <lineage>
        <taxon>Bacteria</taxon>
        <taxon>Pseudomonadati</taxon>
        <taxon>Campylobacterota</taxon>
        <taxon>Epsilonproteobacteria</taxon>
        <taxon>Campylobacterales</taxon>
        <taxon>Helicobacteraceae</taxon>
        <taxon>Helicobacter</taxon>
    </lineage>
</organism>
<evidence type="ECO:0000255" key="1">
    <source>
        <dbReference type="HAMAP-Rule" id="MF_00193"/>
    </source>
</evidence>
<reference key="1">
    <citation type="journal article" date="2003" name="Proc. Natl. Acad. Sci. U.S.A.">
        <title>The complete genome sequence of the carcinogenic bacterium Helicobacter hepaticus.</title>
        <authorList>
            <person name="Suerbaum S."/>
            <person name="Josenhans C."/>
            <person name="Sterzenbach T."/>
            <person name="Drescher B."/>
            <person name="Brandt P."/>
            <person name="Bell M."/>
            <person name="Droege M."/>
            <person name="Fartmann B."/>
            <person name="Fischer H.-P."/>
            <person name="Ge Z."/>
            <person name="Hoerster A."/>
            <person name="Holland R."/>
            <person name="Klein K."/>
            <person name="Koenig J."/>
            <person name="Macko L."/>
            <person name="Mendz G.L."/>
            <person name="Nyakatura G."/>
            <person name="Schauer D.B."/>
            <person name="Shen Z."/>
            <person name="Weber J."/>
            <person name="Frosch M."/>
            <person name="Fox J.G."/>
        </authorList>
    </citation>
    <scope>NUCLEOTIDE SEQUENCE [LARGE SCALE GENOMIC DNA]</scope>
    <source>
        <strain>ATCC 51449 / 3B1</strain>
    </source>
</reference>
<accession>Q7VHF9</accession>
<proteinExistence type="inferred from homology"/>
<sequence>MKHFVNPCIHFIQKQLQERGFKKVVLGLSGGIDSAVVATLATLALGSENVRALLMPSLSSNEEHFNDAFNLAHNLELESKIIQLAPFQENFAKQEGMDLSGKYMEKLDMNQKMRMGNFCARIRMTMLYDCASADNALVLGTSNKSEILLGYGTIFGDLAYAINPIGGLYKTQIFAFARALNVPQEIIAKKPSADLFANQSDETDLGYNYADIDTFLEAFEKLGGVEATQNKEREHIKEKLKNAGFECNMIESLSTRVWNNTFKRTKPTILEYKV</sequence>
<protein>
    <recommendedName>
        <fullName evidence="1">NH(3)-dependent NAD(+) synthetase</fullName>
        <ecNumber evidence="1">6.3.1.5</ecNumber>
    </recommendedName>
</protein>
<dbReference type="EC" id="6.3.1.5" evidence="1"/>
<dbReference type="EMBL" id="AE017125">
    <property type="protein sequence ID" value="AAP77605.1"/>
    <property type="molecule type" value="Genomic_DNA"/>
</dbReference>
<dbReference type="RefSeq" id="WP_011115848.1">
    <property type="nucleotide sequence ID" value="NC_004917.1"/>
</dbReference>
<dbReference type="SMR" id="Q7VHF9"/>
<dbReference type="STRING" id="235279.HH_1008"/>
<dbReference type="KEGG" id="hhe:HH_1008"/>
<dbReference type="eggNOG" id="COG0171">
    <property type="taxonomic scope" value="Bacteria"/>
</dbReference>
<dbReference type="HOGENOM" id="CLU_059327_1_2_7"/>
<dbReference type="OrthoDB" id="9799210at2"/>
<dbReference type="UniPathway" id="UPA00253">
    <property type="reaction ID" value="UER00333"/>
</dbReference>
<dbReference type="Proteomes" id="UP000002495">
    <property type="component" value="Chromosome"/>
</dbReference>
<dbReference type="GO" id="GO:0005737">
    <property type="term" value="C:cytoplasm"/>
    <property type="evidence" value="ECO:0007669"/>
    <property type="project" value="InterPro"/>
</dbReference>
<dbReference type="GO" id="GO:0005524">
    <property type="term" value="F:ATP binding"/>
    <property type="evidence" value="ECO:0007669"/>
    <property type="project" value="UniProtKB-UniRule"/>
</dbReference>
<dbReference type="GO" id="GO:0004359">
    <property type="term" value="F:glutaminase activity"/>
    <property type="evidence" value="ECO:0007669"/>
    <property type="project" value="InterPro"/>
</dbReference>
<dbReference type="GO" id="GO:0046872">
    <property type="term" value="F:metal ion binding"/>
    <property type="evidence" value="ECO:0007669"/>
    <property type="project" value="UniProtKB-KW"/>
</dbReference>
<dbReference type="GO" id="GO:0003952">
    <property type="term" value="F:NAD+ synthase (glutamine-hydrolyzing) activity"/>
    <property type="evidence" value="ECO:0007669"/>
    <property type="project" value="InterPro"/>
</dbReference>
<dbReference type="GO" id="GO:0008795">
    <property type="term" value="F:NAD+ synthase activity"/>
    <property type="evidence" value="ECO:0007669"/>
    <property type="project" value="UniProtKB-UniRule"/>
</dbReference>
<dbReference type="GO" id="GO:0009435">
    <property type="term" value="P:NAD biosynthetic process"/>
    <property type="evidence" value="ECO:0007669"/>
    <property type="project" value="UniProtKB-UniRule"/>
</dbReference>
<dbReference type="CDD" id="cd00553">
    <property type="entry name" value="NAD_synthase"/>
    <property type="match status" value="1"/>
</dbReference>
<dbReference type="FunFam" id="3.40.50.620:FF:000106">
    <property type="entry name" value="Glutamine-dependent NAD(+) synthetase"/>
    <property type="match status" value="1"/>
</dbReference>
<dbReference type="Gene3D" id="3.40.50.620">
    <property type="entry name" value="HUPs"/>
    <property type="match status" value="1"/>
</dbReference>
<dbReference type="HAMAP" id="MF_00193">
    <property type="entry name" value="NadE_ammonia_dep"/>
    <property type="match status" value="1"/>
</dbReference>
<dbReference type="InterPro" id="IPR022310">
    <property type="entry name" value="NAD/GMP_synthase"/>
</dbReference>
<dbReference type="InterPro" id="IPR003694">
    <property type="entry name" value="NAD_synthase"/>
</dbReference>
<dbReference type="InterPro" id="IPR022926">
    <property type="entry name" value="NH(3)-dep_NAD(+)_synth"/>
</dbReference>
<dbReference type="InterPro" id="IPR014729">
    <property type="entry name" value="Rossmann-like_a/b/a_fold"/>
</dbReference>
<dbReference type="NCBIfam" id="TIGR00552">
    <property type="entry name" value="nadE"/>
    <property type="match status" value="1"/>
</dbReference>
<dbReference type="NCBIfam" id="NF010587">
    <property type="entry name" value="PRK13980.1"/>
    <property type="match status" value="1"/>
</dbReference>
<dbReference type="PANTHER" id="PTHR23090:SF9">
    <property type="entry name" value="GLUTAMINE-DEPENDENT NAD(+) SYNTHETASE"/>
    <property type="match status" value="1"/>
</dbReference>
<dbReference type="PANTHER" id="PTHR23090">
    <property type="entry name" value="NH 3 /GLUTAMINE-DEPENDENT NAD + SYNTHETASE"/>
    <property type="match status" value="1"/>
</dbReference>
<dbReference type="Pfam" id="PF02540">
    <property type="entry name" value="NAD_synthase"/>
    <property type="match status" value="1"/>
</dbReference>
<dbReference type="SUPFAM" id="SSF52402">
    <property type="entry name" value="Adenine nucleotide alpha hydrolases-like"/>
    <property type="match status" value="1"/>
</dbReference>
<feature type="chain" id="PRO_0000152172" description="NH(3)-dependent NAD(+) synthetase">
    <location>
        <begin position="1"/>
        <end position="274"/>
    </location>
</feature>
<feature type="binding site" evidence="1">
    <location>
        <begin position="27"/>
        <end position="34"/>
    </location>
    <ligand>
        <name>ATP</name>
        <dbReference type="ChEBI" id="CHEBI:30616"/>
    </ligand>
</feature>
<feature type="binding site" evidence="1">
    <location>
        <position position="33"/>
    </location>
    <ligand>
        <name>Mg(2+)</name>
        <dbReference type="ChEBI" id="CHEBI:18420"/>
    </ligand>
</feature>
<feature type="binding site" evidence="1">
    <location>
        <position position="121"/>
    </location>
    <ligand>
        <name>deamido-NAD(+)</name>
        <dbReference type="ChEBI" id="CHEBI:58437"/>
    </ligand>
</feature>
<feature type="binding site" evidence="1">
    <location>
        <position position="141"/>
    </location>
    <ligand>
        <name>ATP</name>
        <dbReference type="ChEBI" id="CHEBI:30616"/>
    </ligand>
</feature>
<feature type="binding site" evidence="1">
    <location>
        <position position="146"/>
    </location>
    <ligand>
        <name>Mg(2+)</name>
        <dbReference type="ChEBI" id="CHEBI:18420"/>
    </ligand>
</feature>
<feature type="binding site" evidence="1">
    <location>
        <position position="170"/>
    </location>
    <ligand>
        <name>ATP</name>
        <dbReference type="ChEBI" id="CHEBI:30616"/>
    </ligand>
</feature>
<feature type="binding site" evidence="1">
    <location>
        <position position="192"/>
    </location>
    <ligand>
        <name>ATP</name>
        <dbReference type="ChEBI" id="CHEBI:30616"/>
    </ligand>
</feature>
<name>NADE_HELHP</name>
<gene>
    <name evidence="1" type="primary">nadE</name>
    <name type="ordered locus">HH_1008</name>
</gene>
<keyword id="KW-0067">ATP-binding</keyword>
<keyword id="KW-0436">Ligase</keyword>
<keyword id="KW-0460">Magnesium</keyword>
<keyword id="KW-0479">Metal-binding</keyword>
<keyword id="KW-0520">NAD</keyword>
<keyword id="KW-0547">Nucleotide-binding</keyword>
<keyword id="KW-1185">Reference proteome</keyword>